<evidence type="ECO:0000250" key="1"/>
<evidence type="ECO:0000255" key="2"/>
<evidence type="ECO:0000305" key="3"/>
<name>PUS10_DROME</name>
<accession>Q9VPK7</accession>
<sequence>MKNQDLVEYLRSCGVCEICQLRYLKARGAEYRNINETLQKLDVKLNENVENEELVISEGSQPSKRARLGVCSTCLGLFSKDFQNELLSSILASDFAKYDCQKIVLAICLPMSLQLRQLAMWFALRRRFGPSIDENNPPDVPIKEAVKLILHPIICEKLAKVYDANGLMINIDLTHSLEGEEVEKLVKLNKEAFPAKASHQKRIEISRGLLEKQYQPSKVKAETYEKYFQIPCSNVEESIKLTSIDLQGPLICVAGRYRKLSRELSHTPWILNGQRLMEDSIEEIIIRHVGPHFTEKLGKITFMSSGREDVDVRCLGKGRPFVLEIPNAKRSCLTKDEAFAMERAVDASGMVSIHHLQVVPREELTHIKTGEEQKKKFYRALCALQEPVSVKILEQLQISASFNIQQKTPIRVLHRRPLHTRPRTIYSVTAKVHRGNPKALIIDIVTQAGTYIKELVHGEFGRTTPSLSSIIGKPMDIQALDVVGIDLDWPHEVDNSKHKE</sequence>
<proteinExistence type="evidence at transcript level"/>
<protein>
    <recommendedName>
        <fullName>Putative tRNA pseudouridine synthase Pus10</fullName>
        <ecNumber>5.4.99.25</ecNumber>
    </recommendedName>
    <alternativeName>
        <fullName>Coiled-coil domain-containing protein 139 homolog</fullName>
    </alternativeName>
    <alternativeName>
        <fullName>tRNA pseudouridine 55 synthase</fullName>
        <shortName>Psi55 synthase</shortName>
    </alternativeName>
    <alternativeName>
        <fullName>tRNA pseudouridylate synthase</fullName>
    </alternativeName>
    <alternativeName>
        <fullName>tRNA-uridine isomerase</fullName>
    </alternativeName>
</protein>
<keyword id="KW-0175">Coiled coil</keyword>
<keyword id="KW-0413">Isomerase</keyword>
<keyword id="KW-1185">Reference proteome</keyword>
<keyword id="KW-0819">tRNA processing</keyword>
<reference key="1">
    <citation type="journal article" date="2000" name="Science">
        <title>The genome sequence of Drosophila melanogaster.</title>
        <authorList>
            <person name="Adams M.D."/>
            <person name="Celniker S.E."/>
            <person name="Holt R.A."/>
            <person name="Evans C.A."/>
            <person name="Gocayne J.D."/>
            <person name="Amanatides P.G."/>
            <person name="Scherer S.E."/>
            <person name="Li P.W."/>
            <person name="Hoskins R.A."/>
            <person name="Galle R.F."/>
            <person name="George R.A."/>
            <person name="Lewis S.E."/>
            <person name="Richards S."/>
            <person name="Ashburner M."/>
            <person name="Henderson S.N."/>
            <person name="Sutton G.G."/>
            <person name="Wortman J.R."/>
            <person name="Yandell M.D."/>
            <person name="Zhang Q."/>
            <person name="Chen L.X."/>
            <person name="Brandon R.C."/>
            <person name="Rogers Y.-H.C."/>
            <person name="Blazej R.G."/>
            <person name="Champe M."/>
            <person name="Pfeiffer B.D."/>
            <person name="Wan K.H."/>
            <person name="Doyle C."/>
            <person name="Baxter E.G."/>
            <person name="Helt G."/>
            <person name="Nelson C.R."/>
            <person name="Miklos G.L.G."/>
            <person name="Abril J.F."/>
            <person name="Agbayani A."/>
            <person name="An H.-J."/>
            <person name="Andrews-Pfannkoch C."/>
            <person name="Baldwin D."/>
            <person name="Ballew R.M."/>
            <person name="Basu A."/>
            <person name="Baxendale J."/>
            <person name="Bayraktaroglu L."/>
            <person name="Beasley E.M."/>
            <person name="Beeson K.Y."/>
            <person name="Benos P.V."/>
            <person name="Berman B.P."/>
            <person name="Bhandari D."/>
            <person name="Bolshakov S."/>
            <person name="Borkova D."/>
            <person name="Botchan M.R."/>
            <person name="Bouck J."/>
            <person name="Brokstein P."/>
            <person name="Brottier P."/>
            <person name="Burtis K.C."/>
            <person name="Busam D.A."/>
            <person name="Butler H."/>
            <person name="Cadieu E."/>
            <person name="Center A."/>
            <person name="Chandra I."/>
            <person name="Cherry J.M."/>
            <person name="Cawley S."/>
            <person name="Dahlke C."/>
            <person name="Davenport L.B."/>
            <person name="Davies P."/>
            <person name="de Pablos B."/>
            <person name="Delcher A."/>
            <person name="Deng Z."/>
            <person name="Mays A.D."/>
            <person name="Dew I."/>
            <person name="Dietz S.M."/>
            <person name="Dodson K."/>
            <person name="Doup L.E."/>
            <person name="Downes M."/>
            <person name="Dugan-Rocha S."/>
            <person name="Dunkov B.C."/>
            <person name="Dunn P."/>
            <person name="Durbin K.J."/>
            <person name="Evangelista C.C."/>
            <person name="Ferraz C."/>
            <person name="Ferriera S."/>
            <person name="Fleischmann W."/>
            <person name="Fosler C."/>
            <person name="Gabrielian A.E."/>
            <person name="Garg N.S."/>
            <person name="Gelbart W.M."/>
            <person name="Glasser K."/>
            <person name="Glodek A."/>
            <person name="Gong F."/>
            <person name="Gorrell J.H."/>
            <person name="Gu Z."/>
            <person name="Guan P."/>
            <person name="Harris M."/>
            <person name="Harris N.L."/>
            <person name="Harvey D.A."/>
            <person name="Heiman T.J."/>
            <person name="Hernandez J.R."/>
            <person name="Houck J."/>
            <person name="Hostin D."/>
            <person name="Houston K.A."/>
            <person name="Howland T.J."/>
            <person name="Wei M.-H."/>
            <person name="Ibegwam C."/>
            <person name="Jalali M."/>
            <person name="Kalush F."/>
            <person name="Karpen G.H."/>
            <person name="Ke Z."/>
            <person name="Kennison J.A."/>
            <person name="Ketchum K.A."/>
            <person name="Kimmel B.E."/>
            <person name="Kodira C.D."/>
            <person name="Kraft C.L."/>
            <person name="Kravitz S."/>
            <person name="Kulp D."/>
            <person name="Lai Z."/>
            <person name="Lasko P."/>
            <person name="Lei Y."/>
            <person name="Levitsky A.A."/>
            <person name="Li J.H."/>
            <person name="Li Z."/>
            <person name="Liang Y."/>
            <person name="Lin X."/>
            <person name="Liu X."/>
            <person name="Mattei B."/>
            <person name="McIntosh T.C."/>
            <person name="McLeod M.P."/>
            <person name="McPherson D."/>
            <person name="Merkulov G."/>
            <person name="Milshina N.V."/>
            <person name="Mobarry C."/>
            <person name="Morris J."/>
            <person name="Moshrefi A."/>
            <person name="Mount S.M."/>
            <person name="Moy M."/>
            <person name="Murphy B."/>
            <person name="Murphy L."/>
            <person name="Muzny D.M."/>
            <person name="Nelson D.L."/>
            <person name="Nelson D.R."/>
            <person name="Nelson K.A."/>
            <person name="Nixon K."/>
            <person name="Nusskern D.R."/>
            <person name="Pacleb J.M."/>
            <person name="Palazzolo M."/>
            <person name="Pittman G.S."/>
            <person name="Pan S."/>
            <person name="Pollard J."/>
            <person name="Puri V."/>
            <person name="Reese M.G."/>
            <person name="Reinert K."/>
            <person name="Remington K."/>
            <person name="Saunders R.D.C."/>
            <person name="Scheeler F."/>
            <person name="Shen H."/>
            <person name="Shue B.C."/>
            <person name="Siden-Kiamos I."/>
            <person name="Simpson M."/>
            <person name="Skupski M.P."/>
            <person name="Smith T.J."/>
            <person name="Spier E."/>
            <person name="Spradling A.C."/>
            <person name="Stapleton M."/>
            <person name="Strong R."/>
            <person name="Sun E."/>
            <person name="Svirskas R."/>
            <person name="Tector C."/>
            <person name="Turner R."/>
            <person name="Venter E."/>
            <person name="Wang A.H."/>
            <person name="Wang X."/>
            <person name="Wang Z.-Y."/>
            <person name="Wassarman D.A."/>
            <person name="Weinstock G.M."/>
            <person name="Weissenbach J."/>
            <person name="Williams S.M."/>
            <person name="Woodage T."/>
            <person name="Worley K.C."/>
            <person name="Wu D."/>
            <person name="Yang S."/>
            <person name="Yao Q.A."/>
            <person name="Ye J."/>
            <person name="Yeh R.-F."/>
            <person name="Zaveri J.S."/>
            <person name="Zhan M."/>
            <person name="Zhang G."/>
            <person name="Zhao Q."/>
            <person name="Zheng L."/>
            <person name="Zheng X.H."/>
            <person name="Zhong F.N."/>
            <person name="Zhong W."/>
            <person name="Zhou X."/>
            <person name="Zhu S.C."/>
            <person name="Zhu X."/>
            <person name="Smith H.O."/>
            <person name="Gibbs R.A."/>
            <person name="Myers E.W."/>
            <person name="Rubin G.M."/>
            <person name="Venter J.C."/>
        </authorList>
    </citation>
    <scope>NUCLEOTIDE SEQUENCE [LARGE SCALE GENOMIC DNA]</scope>
    <source>
        <strain>Berkeley</strain>
    </source>
</reference>
<reference key="2">
    <citation type="journal article" date="2002" name="Genome Biol.">
        <title>Annotation of the Drosophila melanogaster euchromatic genome: a systematic review.</title>
        <authorList>
            <person name="Misra S."/>
            <person name="Crosby M.A."/>
            <person name="Mungall C.J."/>
            <person name="Matthews B.B."/>
            <person name="Campbell K.S."/>
            <person name="Hradecky P."/>
            <person name="Huang Y."/>
            <person name="Kaminker J.S."/>
            <person name="Millburn G.H."/>
            <person name="Prochnik S.E."/>
            <person name="Smith C.D."/>
            <person name="Tupy J.L."/>
            <person name="Whitfield E.J."/>
            <person name="Bayraktaroglu L."/>
            <person name="Berman B.P."/>
            <person name="Bettencourt B.R."/>
            <person name="Celniker S.E."/>
            <person name="de Grey A.D.N.J."/>
            <person name="Drysdale R.A."/>
            <person name="Harris N.L."/>
            <person name="Richter J."/>
            <person name="Russo S."/>
            <person name="Schroeder A.J."/>
            <person name="Shu S.Q."/>
            <person name="Stapleton M."/>
            <person name="Yamada C."/>
            <person name="Ashburner M."/>
            <person name="Gelbart W.M."/>
            <person name="Rubin G.M."/>
            <person name="Lewis S.E."/>
        </authorList>
    </citation>
    <scope>GENOME REANNOTATION</scope>
    <source>
        <strain>Berkeley</strain>
    </source>
</reference>
<reference key="3">
    <citation type="journal article" date="2002" name="Genome Biol.">
        <title>A Drosophila full-length cDNA resource.</title>
        <authorList>
            <person name="Stapleton M."/>
            <person name="Carlson J.W."/>
            <person name="Brokstein P."/>
            <person name="Yu C."/>
            <person name="Champe M."/>
            <person name="George R.A."/>
            <person name="Guarin H."/>
            <person name="Kronmiller B."/>
            <person name="Pacleb J.M."/>
            <person name="Park S."/>
            <person name="Wan K.H."/>
            <person name="Rubin G.M."/>
            <person name="Celniker S.E."/>
        </authorList>
    </citation>
    <scope>NUCLEOTIDE SEQUENCE [LARGE SCALE MRNA]</scope>
    <source>
        <strain>Berkeley</strain>
        <tissue>Embryo</tissue>
    </source>
</reference>
<feature type="chain" id="PRO_0000299025" description="Putative tRNA pseudouridine synthase Pus10">
    <location>
        <begin position="1"/>
        <end position="500"/>
    </location>
</feature>
<feature type="region of interest" description="RNA binding forefinger loop" evidence="2">
    <location>
        <begin position="267"/>
        <end position="280"/>
    </location>
</feature>
<feature type="region of interest" description="RNA binding thumb loop" evidence="2">
    <location>
        <begin position="406"/>
        <end position="421"/>
    </location>
</feature>
<feature type="coiled-coil region" evidence="2">
    <location>
        <begin position="30"/>
        <end position="50"/>
    </location>
</feature>
<feature type="active site" description="Nucleophile" evidence="2">
    <location>
        <position position="309"/>
    </location>
</feature>
<feature type="binding site" evidence="2">
    <location>
        <position position="378"/>
    </location>
    <ligand>
        <name>substrate</name>
    </ligand>
</feature>
<feature type="binding site" evidence="2">
    <location>
        <position position="451"/>
    </location>
    <ligand>
        <name>substrate</name>
    </ligand>
</feature>
<organism>
    <name type="scientific">Drosophila melanogaster</name>
    <name type="common">Fruit fly</name>
    <dbReference type="NCBI Taxonomy" id="7227"/>
    <lineage>
        <taxon>Eukaryota</taxon>
        <taxon>Metazoa</taxon>
        <taxon>Ecdysozoa</taxon>
        <taxon>Arthropoda</taxon>
        <taxon>Hexapoda</taxon>
        <taxon>Insecta</taxon>
        <taxon>Pterygota</taxon>
        <taxon>Neoptera</taxon>
        <taxon>Endopterygota</taxon>
        <taxon>Diptera</taxon>
        <taxon>Brachycera</taxon>
        <taxon>Muscomorpha</taxon>
        <taxon>Ephydroidea</taxon>
        <taxon>Drosophilidae</taxon>
        <taxon>Drosophila</taxon>
        <taxon>Sophophora</taxon>
    </lineage>
</organism>
<gene>
    <name type="primary">Pus10</name>
    <name type="ORF">CG3709</name>
</gene>
<dbReference type="EC" id="5.4.99.25"/>
<dbReference type="EMBL" id="AE014134">
    <property type="protein sequence ID" value="AAF51539.2"/>
    <property type="molecule type" value="Genomic_DNA"/>
</dbReference>
<dbReference type="EMBL" id="AY069446">
    <property type="protein sequence ID" value="AAL39591.1"/>
    <property type="molecule type" value="mRNA"/>
</dbReference>
<dbReference type="RefSeq" id="NP_608500.1">
    <property type="nucleotide sequence ID" value="NM_134656.4"/>
</dbReference>
<dbReference type="SMR" id="Q9VPK7"/>
<dbReference type="BioGRID" id="59438">
    <property type="interactions" value="2"/>
</dbReference>
<dbReference type="FunCoup" id="Q9VPK7">
    <property type="interactions" value="1967"/>
</dbReference>
<dbReference type="IntAct" id="Q9VPK7">
    <property type="interactions" value="1"/>
</dbReference>
<dbReference type="STRING" id="7227.FBpp0077806"/>
<dbReference type="PaxDb" id="7227-FBpp0077806"/>
<dbReference type="DNASU" id="33178"/>
<dbReference type="EnsemblMetazoa" id="FBtr0078147">
    <property type="protein sequence ID" value="FBpp0077806"/>
    <property type="gene ID" value="FBgn0031227"/>
</dbReference>
<dbReference type="GeneID" id="33178"/>
<dbReference type="KEGG" id="dme:Dmel_CG3709"/>
<dbReference type="UCSC" id="CG3709-RA">
    <property type="organism name" value="d. melanogaster"/>
</dbReference>
<dbReference type="AGR" id="FB:FBgn0031227"/>
<dbReference type="CTD" id="150962"/>
<dbReference type="FlyBase" id="FBgn0031227">
    <property type="gene designation" value="Pus10"/>
</dbReference>
<dbReference type="VEuPathDB" id="VectorBase:FBgn0031227"/>
<dbReference type="eggNOG" id="KOG2364">
    <property type="taxonomic scope" value="Eukaryota"/>
</dbReference>
<dbReference type="GeneTree" id="ENSGT00390000007529"/>
<dbReference type="HOGENOM" id="CLU_028780_2_0_1"/>
<dbReference type="InParanoid" id="Q9VPK7"/>
<dbReference type="OMA" id="WFALQRK"/>
<dbReference type="OrthoDB" id="29661at2759"/>
<dbReference type="PhylomeDB" id="Q9VPK7"/>
<dbReference type="BioGRID-ORCS" id="33178">
    <property type="hits" value="1 hit in 1 CRISPR screen"/>
</dbReference>
<dbReference type="GenomeRNAi" id="33178"/>
<dbReference type="PRO" id="PR:Q9VPK7"/>
<dbReference type="Proteomes" id="UP000000803">
    <property type="component" value="Chromosome 2L"/>
</dbReference>
<dbReference type="Bgee" id="FBgn0031227">
    <property type="expression patterns" value="Expressed in egg chamber and 27 other cell types or tissues"/>
</dbReference>
<dbReference type="GO" id="GO:0005737">
    <property type="term" value="C:cytoplasm"/>
    <property type="evidence" value="ECO:0000250"/>
    <property type="project" value="FlyBase"/>
</dbReference>
<dbReference type="GO" id="GO:0009982">
    <property type="term" value="F:pseudouridine synthase activity"/>
    <property type="evidence" value="ECO:0000318"/>
    <property type="project" value="GO_Central"/>
</dbReference>
<dbReference type="GO" id="GO:0003723">
    <property type="term" value="F:RNA binding"/>
    <property type="evidence" value="ECO:0007669"/>
    <property type="project" value="InterPro"/>
</dbReference>
<dbReference type="GO" id="GO:0106029">
    <property type="term" value="F:tRNA pseudouridine synthase activity"/>
    <property type="evidence" value="ECO:0000250"/>
    <property type="project" value="FlyBase"/>
</dbReference>
<dbReference type="GO" id="GO:0160148">
    <property type="term" value="F:tRNA pseudouridine(55) synthase activity"/>
    <property type="evidence" value="ECO:0007669"/>
    <property type="project" value="UniProtKB-EC"/>
</dbReference>
<dbReference type="GO" id="GO:0031119">
    <property type="term" value="P:tRNA pseudouridine synthesis"/>
    <property type="evidence" value="ECO:0000318"/>
    <property type="project" value="GO_Central"/>
</dbReference>
<dbReference type="FunFam" id="3.30.70.2510:FF:000001">
    <property type="entry name" value="tRNA pseudouridine synthase Pus10"/>
    <property type="match status" value="1"/>
</dbReference>
<dbReference type="FunFam" id="3.30.70.3190:FF:000001">
    <property type="entry name" value="tRNA pseudouridine synthase Pus10"/>
    <property type="match status" value="1"/>
</dbReference>
<dbReference type="Gene3D" id="3.30.70.2510">
    <property type="match status" value="1"/>
</dbReference>
<dbReference type="Gene3D" id="3.30.70.3190">
    <property type="match status" value="1"/>
</dbReference>
<dbReference type="InterPro" id="IPR020103">
    <property type="entry name" value="PsdUridine_synth_cat_dom_sf"/>
</dbReference>
<dbReference type="InterPro" id="IPR039894">
    <property type="entry name" value="Pus10-like"/>
</dbReference>
<dbReference type="InterPro" id="IPR048741">
    <property type="entry name" value="Pus10-like_C"/>
</dbReference>
<dbReference type="InterPro" id="IPR048742">
    <property type="entry name" value="Pus10_N_euk"/>
</dbReference>
<dbReference type="PANTHER" id="PTHR21568">
    <property type="entry name" value="TRNA PSEUDOURIDINE SYNTHASE PUS10"/>
    <property type="match status" value="1"/>
</dbReference>
<dbReference type="PANTHER" id="PTHR21568:SF0">
    <property type="entry name" value="TRNA PSEUDOURIDINE SYNTHASE PUS10"/>
    <property type="match status" value="1"/>
</dbReference>
<dbReference type="Pfam" id="PF21238">
    <property type="entry name" value="Pus10_C"/>
    <property type="match status" value="1"/>
</dbReference>
<dbReference type="Pfam" id="PF21237">
    <property type="entry name" value="Pus10_N_euk"/>
    <property type="match status" value="1"/>
</dbReference>
<dbReference type="SUPFAM" id="SSF55120">
    <property type="entry name" value="Pseudouridine synthase"/>
    <property type="match status" value="1"/>
</dbReference>
<comment type="function">
    <text evidence="1">Responsible for synthesis of pseudouridine from uracil-55 in the psi GC loop of transfer RNAs.</text>
</comment>
<comment type="catalytic activity">
    <reaction>
        <text>uridine(55) in tRNA = pseudouridine(55) in tRNA</text>
        <dbReference type="Rhea" id="RHEA:42532"/>
        <dbReference type="Rhea" id="RHEA-COMP:10101"/>
        <dbReference type="Rhea" id="RHEA-COMP:10102"/>
        <dbReference type="ChEBI" id="CHEBI:65314"/>
        <dbReference type="ChEBI" id="CHEBI:65315"/>
        <dbReference type="EC" id="5.4.99.25"/>
    </reaction>
</comment>
<comment type="similarity">
    <text evidence="3">Belongs to the pseudouridine synthase Pus10 family.</text>
</comment>